<proteinExistence type="evidence at transcript level"/>
<keyword id="KW-0143">Chaperone</keyword>
<keyword id="KW-0963">Cytoplasm</keyword>
<keyword id="KW-0496">Mitochondrion</keyword>
<keyword id="KW-0539">Nucleus</keyword>
<keyword id="KW-1185">Reference proteome</keyword>
<reference key="1">
    <citation type="journal article" date="2004" name="Genome Res.">
        <title>The status, quality, and expansion of the NIH full-length cDNA project: the Mammalian Gene Collection (MGC).</title>
        <authorList>
            <consortium name="The MGC Project Team"/>
        </authorList>
    </citation>
    <scope>NUCLEOTIDE SEQUENCE [LARGE SCALE MRNA]</scope>
    <source>
        <tissue>Brain</tissue>
    </source>
</reference>
<feature type="chain" id="PRO_0000330360" description="Prefoldin subunit 2">
    <location>
        <begin position="1"/>
        <end position="154"/>
    </location>
</feature>
<feature type="region of interest" description="Disordered" evidence="3">
    <location>
        <begin position="1"/>
        <end position="20"/>
    </location>
</feature>
<feature type="region of interest" description="Disordered" evidence="3">
    <location>
        <begin position="126"/>
        <end position="154"/>
    </location>
</feature>
<feature type="compositionally biased region" description="Gly residues" evidence="3">
    <location>
        <begin position="9"/>
        <end position="18"/>
    </location>
</feature>
<feature type="compositionally biased region" description="Basic and acidic residues" evidence="3">
    <location>
        <begin position="126"/>
        <end position="139"/>
    </location>
</feature>
<feature type="compositionally biased region" description="Low complexity" evidence="3">
    <location>
        <begin position="141"/>
        <end position="154"/>
    </location>
</feature>
<evidence type="ECO:0000250" key="1">
    <source>
        <dbReference type="UniProtKB" id="P40005"/>
    </source>
</evidence>
<evidence type="ECO:0000250" key="2">
    <source>
        <dbReference type="UniProtKB" id="Q9UHV9"/>
    </source>
</evidence>
<evidence type="ECO:0000256" key="3">
    <source>
        <dbReference type="SAM" id="MobiDB-lite"/>
    </source>
</evidence>
<evidence type="ECO:0000305" key="4"/>
<comment type="function">
    <text evidence="2">Binds specifically to cytosolic chaperonin (c-CPN) and transfers target proteins to it. Binds to nascent polypeptide chain and promotes folding in an environment in which there are many competing pathways for nonnative proteins.</text>
</comment>
<comment type="subunit">
    <text evidence="1 2">Heterohexamer of two PFD-alpha type and four PFD-beta type subunits. Component of the PAQosome complex which is responsible for the biogenesis of several protein complexes and which consists of R2TP complex members RUVBL1, RUVBL2, RPAP3 and PIH1D1, URI complex members PFDN2, PFDN6, PDRG1, UXT and URI1 as well as ASDURF, POLR2E and DNAAF10/WDR92. Interacts with URI1; the interaction is phosphorylation-dependent and occurs in a growth-dependent manner.</text>
</comment>
<comment type="subcellular location">
    <subcellularLocation>
        <location evidence="2">Nucleus</location>
    </subcellularLocation>
    <subcellularLocation>
        <location evidence="2">Cytoplasm</location>
    </subcellularLocation>
    <subcellularLocation>
        <location evidence="2">Mitochondrion</location>
    </subcellularLocation>
</comment>
<comment type="similarity">
    <text evidence="4">Belongs to the prefoldin subunit beta family.</text>
</comment>
<gene>
    <name type="primary">Pfdn2</name>
</gene>
<dbReference type="EMBL" id="BC158649">
    <property type="protein sequence ID" value="AAI58650.1"/>
    <property type="molecule type" value="mRNA"/>
</dbReference>
<dbReference type="RefSeq" id="NP_001102946.1">
    <property type="nucleotide sequence ID" value="NM_001109476.1"/>
</dbReference>
<dbReference type="SMR" id="B0BN18"/>
<dbReference type="BioGRID" id="600470">
    <property type="interactions" value="1"/>
</dbReference>
<dbReference type="FunCoup" id="B0BN18">
    <property type="interactions" value="2537"/>
</dbReference>
<dbReference type="STRING" id="10116.ENSRNOP00000005346"/>
<dbReference type="iPTMnet" id="B0BN18"/>
<dbReference type="PhosphoSitePlus" id="B0BN18"/>
<dbReference type="jPOST" id="B0BN18"/>
<dbReference type="PaxDb" id="10116-ENSRNOP00000005346"/>
<dbReference type="PeptideAtlas" id="B0BN18"/>
<dbReference type="Ensembl" id="ENSRNOT00000005346.5">
    <property type="protein sequence ID" value="ENSRNOP00000005346.3"/>
    <property type="gene ID" value="ENSRNOG00000066932.1"/>
</dbReference>
<dbReference type="GeneID" id="685607"/>
<dbReference type="KEGG" id="rno:685607"/>
<dbReference type="UCSC" id="RGD:1591406">
    <property type="organism name" value="rat"/>
</dbReference>
<dbReference type="AGR" id="RGD:1591406"/>
<dbReference type="CTD" id="5202"/>
<dbReference type="RGD" id="1591406">
    <property type="gene designation" value="Pfdn2"/>
</dbReference>
<dbReference type="eggNOG" id="KOG4098">
    <property type="taxonomic scope" value="Eukaryota"/>
</dbReference>
<dbReference type="GeneTree" id="ENSGT00390000009272"/>
<dbReference type="HOGENOM" id="CLU_113004_0_0_1"/>
<dbReference type="InParanoid" id="B0BN18"/>
<dbReference type="OMA" id="CFKMIGG"/>
<dbReference type="OrthoDB" id="72416at9989"/>
<dbReference type="PhylomeDB" id="B0BN18"/>
<dbReference type="TreeFam" id="TF313252"/>
<dbReference type="ChiTaRS" id="Pfdn2">
    <property type="organism name" value="rat"/>
</dbReference>
<dbReference type="PRO" id="PR:B0BN18"/>
<dbReference type="Proteomes" id="UP000002494">
    <property type="component" value="Chromosome 13"/>
</dbReference>
<dbReference type="Bgee" id="ENSRNOG00000003983">
    <property type="expression patterns" value="Expressed in frontal cortex and 20 other cell types or tissues"/>
</dbReference>
<dbReference type="GO" id="GO:0005737">
    <property type="term" value="C:cytoplasm"/>
    <property type="evidence" value="ECO:0000266"/>
    <property type="project" value="RGD"/>
</dbReference>
<dbReference type="GO" id="GO:0005739">
    <property type="term" value="C:mitochondrion"/>
    <property type="evidence" value="ECO:0007669"/>
    <property type="project" value="UniProtKB-SubCell"/>
</dbReference>
<dbReference type="GO" id="GO:0005634">
    <property type="term" value="C:nucleus"/>
    <property type="evidence" value="ECO:0000266"/>
    <property type="project" value="RGD"/>
</dbReference>
<dbReference type="GO" id="GO:0016272">
    <property type="term" value="C:prefoldin complex"/>
    <property type="evidence" value="ECO:0000266"/>
    <property type="project" value="RGD"/>
</dbReference>
<dbReference type="GO" id="GO:1990062">
    <property type="term" value="C:RPAP3/R2TP/prefoldin-like complex"/>
    <property type="evidence" value="ECO:0000266"/>
    <property type="project" value="RGD"/>
</dbReference>
<dbReference type="GO" id="GO:0001540">
    <property type="term" value="F:amyloid-beta binding"/>
    <property type="evidence" value="ECO:0000266"/>
    <property type="project" value="RGD"/>
</dbReference>
<dbReference type="GO" id="GO:0044183">
    <property type="term" value="F:protein folding chaperone"/>
    <property type="evidence" value="ECO:0000266"/>
    <property type="project" value="RGD"/>
</dbReference>
<dbReference type="GO" id="GO:0051082">
    <property type="term" value="F:unfolded protein binding"/>
    <property type="evidence" value="ECO:0000266"/>
    <property type="project" value="RGD"/>
</dbReference>
<dbReference type="GO" id="GO:1905907">
    <property type="term" value="P:negative regulation of amyloid fibril formation"/>
    <property type="evidence" value="ECO:0000266"/>
    <property type="project" value="RGD"/>
</dbReference>
<dbReference type="GO" id="GO:0051495">
    <property type="term" value="P:positive regulation of cytoskeleton organization"/>
    <property type="evidence" value="ECO:0000266"/>
    <property type="project" value="RGD"/>
</dbReference>
<dbReference type="GO" id="GO:0006457">
    <property type="term" value="P:protein folding"/>
    <property type="evidence" value="ECO:0000266"/>
    <property type="project" value="RGD"/>
</dbReference>
<dbReference type="CDD" id="cd23163">
    <property type="entry name" value="Prefoldin_2"/>
    <property type="match status" value="1"/>
</dbReference>
<dbReference type="FunFam" id="1.10.287.370:FF:000002">
    <property type="entry name" value="Prefoldin subunit 2"/>
    <property type="match status" value="1"/>
</dbReference>
<dbReference type="Gene3D" id="1.10.287.370">
    <property type="match status" value="1"/>
</dbReference>
<dbReference type="InterPro" id="IPR027235">
    <property type="entry name" value="PFD2"/>
</dbReference>
<dbReference type="InterPro" id="IPR002777">
    <property type="entry name" value="PFD_beta-like"/>
</dbReference>
<dbReference type="InterPro" id="IPR009053">
    <property type="entry name" value="Prefoldin"/>
</dbReference>
<dbReference type="PANTHER" id="PTHR13303">
    <property type="entry name" value="PREFOLDIN SUBUNIT 2"/>
    <property type="match status" value="1"/>
</dbReference>
<dbReference type="Pfam" id="PF01920">
    <property type="entry name" value="Prefoldin_2"/>
    <property type="match status" value="1"/>
</dbReference>
<dbReference type="SUPFAM" id="SSF46579">
    <property type="entry name" value="Prefoldin"/>
    <property type="match status" value="1"/>
</dbReference>
<name>PFD2_RAT</name>
<protein>
    <recommendedName>
        <fullName>Prefoldin subunit 2</fullName>
    </recommendedName>
</protein>
<organism>
    <name type="scientific">Rattus norvegicus</name>
    <name type="common">Rat</name>
    <dbReference type="NCBI Taxonomy" id="10116"/>
    <lineage>
        <taxon>Eukaryota</taxon>
        <taxon>Metazoa</taxon>
        <taxon>Chordata</taxon>
        <taxon>Craniata</taxon>
        <taxon>Vertebrata</taxon>
        <taxon>Euteleostomi</taxon>
        <taxon>Mammalia</taxon>
        <taxon>Eutheria</taxon>
        <taxon>Euarchontoglires</taxon>
        <taxon>Glires</taxon>
        <taxon>Rodentia</taxon>
        <taxon>Myomorpha</taxon>
        <taxon>Muroidea</taxon>
        <taxon>Muridae</taxon>
        <taxon>Murinae</taxon>
        <taxon>Rattus</taxon>
    </lineage>
</organism>
<accession>B0BN18</accession>
<sequence length="154" mass="16580">MADSSGRVGKSGGSGTGKGAVSAEQVIAGFNRLRQEQRGLASKAAELEMELNEHSLVIDTLKEVDETRKCYRMVGGVLVERTVKEVLPALEGNKEQIQKIIETLSQQLQAKGKELNEFREKHNIRLMGEDEKPAAKENSEGAGAKSSSAGVLVS</sequence>